<sequence>MKIGIINTKIRTVFSAFACMIAASLVCTMPARAVVEININKGVIEPLPIAITDFLSADQLGSNITSVIAADLERSGLFAPIDKGAFIEKISNPDAAPRFEDWKVINAQALVTGRITKQPDGRLKAEFRLWDTFGGQQMIGQQFFTTPDNWRRVAHIIADAIYERLTGDKGYFDTRVVFVDESGPAQKRVKRLAIMDQDGANVRFISDGRALSLTPRFSPNRQEVTYMSFEGGSPKVYLLQLETGQRELVGNFPGMTIAPRFSPDGQKVVMSLLQDDGSANIYTMDLRNRTTTRLTSSQAIDTGASYSPDGSQIVFTSDRGGRPQLYVMGADGSNPRRISMGDGSYSTPVWSPRGDLIAFTKQSQGQFSIGVMKTDGSGERLLTSGFHNEGPTWAPNGRVLMFFRKAAGAGGPKLFTIDLTGRNERQIQTPNFASDPAWSPLLE</sequence>
<accession>Q2YRD7</accession>
<feature type="signal peptide" evidence="1">
    <location>
        <begin position="1"/>
        <end position="33"/>
    </location>
</feature>
<feature type="chain" id="PRO_0000259033" description="Tol-Pal system protein TolB" evidence="1">
    <location>
        <begin position="34"/>
        <end position="443"/>
    </location>
</feature>
<reference key="1">
    <citation type="journal article" date="2005" name="Infect. Immun.">
        <title>Whole-genome analyses of speciation events in pathogenic Brucellae.</title>
        <authorList>
            <person name="Chain P.S."/>
            <person name="Comerci D.J."/>
            <person name="Tolmasky M.E."/>
            <person name="Larimer F.W."/>
            <person name="Malfatti S.A."/>
            <person name="Vergez L.M."/>
            <person name="Aguero F."/>
            <person name="Land M.L."/>
            <person name="Ugalde R.A."/>
            <person name="Garcia E."/>
        </authorList>
    </citation>
    <scope>NUCLEOTIDE SEQUENCE [LARGE SCALE GENOMIC DNA]</scope>
    <source>
        <strain>2308</strain>
    </source>
</reference>
<organism>
    <name type="scientific">Brucella abortus (strain 2308)</name>
    <dbReference type="NCBI Taxonomy" id="359391"/>
    <lineage>
        <taxon>Bacteria</taxon>
        <taxon>Pseudomonadati</taxon>
        <taxon>Pseudomonadota</taxon>
        <taxon>Alphaproteobacteria</taxon>
        <taxon>Hyphomicrobiales</taxon>
        <taxon>Brucellaceae</taxon>
        <taxon>Brucella/Ochrobactrum group</taxon>
        <taxon>Brucella</taxon>
    </lineage>
</organism>
<comment type="function">
    <text evidence="1">Part of the Tol-Pal system, which plays a role in outer membrane invagination during cell division and is important for maintaining outer membrane integrity.</text>
</comment>
<comment type="subunit">
    <text evidence="1">The Tol-Pal system is composed of five core proteins: the inner membrane proteins TolA, TolQ and TolR, the periplasmic protein TolB and the outer membrane protein Pal. They form a network linking the inner and outer membranes and the peptidoglycan layer.</text>
</comment>
<comment type="subcellular location">
    <subcellularLocation>
        <location evidence="1">Periplasm</location>
    </subcellularLocation>
</comment>
<comment type="similarity">
    <text evidence="1">Belongs to the TolB family.</text>
</comment>
<protein>
    <recommendedName>
        <fullName evidence="1">Tol-Pal system protein TolB</fullName>
    </recommendedName>
</protein>
<evidence type="ECO:0000255" key="1">
    <source>
        <dbReference type="HAMAP-Rule" id="MF_00671"/>
    </source>
</evidence>
<name>TOLB_BRUA2</name>
<gene>
    <name evidence="1" type="primary">tolB</name>
    <name type="ordered locus">BAB1_1709</name>
</gene>
<dbReference type="EMBL" id="AM040264">
    <property type="protein sequence ID" value="CAJ11665.1"/>
    <property type="molecule type" value="Genomic_DNA"/>
</dbReference>
<dbReference type="RefSeq" id="WP_002964785.1">
    <property type="nucleotide sequence ID" value="NZ_KN046823.1"/>
</dbReference>
<dbReference type="SMR" id="Q2YRD7"/>
<dbReference type="STRING" id="359391.BAB1_1709"/>
<dbReference type="GeneID" id="97533149"/>
<dbReference type="KEGG" id="bmf:BAB1_1709"/>
<dbReference type="PATRIC" id="fig|359391.11.peg.223"/>
<dbReference type="HOGENOM" id="CLU_047123_0_0_5"/>
<dbReference type="PhylomeDB" id="Q2YRD7"/>
<dbReference type="Proteomes" id="UP000002719">
    <property type="component" value="Chromosome I"/>
</dbReference>
<dbReference type="GO" id="GO:0042597">
    <property type="term" value="C:periplasmic space"/>
    <property type="evidence" value="ECO:0007669"/>
    <property type="project" value="UniProtKB-SubCell"/>
</dbReference>
<dbReference type="GO" id="GO:0051301">
    <property type="term" value="P:cell division"/>
    <property type="evidence" value="ECO:0007669"/>
    <property type="project" value="UniProtKB-UniRule"/>
</dbReference>
<dbReference type="GO" id="GO:0017038">
    <property type="term" value="P:protein import"/>
    <property type="evidence" value="ECO:0007669"/>
    <property type="project" value="InterPro"/>
</dbReference>
<dbReference type="Gene3D" id="2.120.10.30">
    <property type="entry name" value="TolB, C-terminal domain"/>
    <property type="match status" value="1"/>
</dbReference>
<dbReference type="Gene3D" id="3.40.50.10070">
    <property type="entry name" value="TolB, N-terminal domain"/>
    <property type="match status" value="1"/>
</dbReference>
<dbReference type="HAMAP" id="MF_00671">
    <property type="entry name" value="TolB"/>
    <property type="match status" value="1"/>
</dbReference>
<dbReference type="InterPro" id="IPR011042">
    <property type="entry name" value="6-blade_b-propeller_TolB-like"/>
</dbReference>
<dbReference type="InterPro" id="IPR011659">
    <property type="entry name" value="PD40"/>
</dbReference>
<dbReference type="InterPro" id="IPR014167">
    <property type="entry name" value="Tol-Pal_TolB"/>
</dbReference>
<dbReference type="InterPro" id="IPR007195">
    <property type="entry name" value="TolB_N"/>
</dbReference>
<dbReference type="NCBIfam" id="TIGR02800">
    <property type="entry name" value="propeller_TolB"/>
    <property type="match status" value="1"/>
</dbReference>
<dbReference type="PANTHER" id="PTHR36842:SF1">
    <property type="entry name" value="PROTEIN TOLB"/>
    <property type="match status" value="1"/>
</dbReference>
<dbReference type="PANTHER" id="PTHR36842">
    <property type="entry name" value="PROTEIN TOLB HOMOLOG"/>
    <property type="match status" value="1"/>
</dbReference>
<dbReference type="Pfam" id="PF07676">
    <property type="entry name" value="PD40"/>
    <property type="match status" value="3"/>
</dbReference>
<dbReference type="Pfam" id="PF04052">
    <property type="entry name" value="TolB_N"/>
    <property type="match status" value="1"/>
</dbReference>
<dbReference type="SUPFAM" id="SSF52964">
    <property type="entry name" value="TolB, N-terminal domain"/>
    <property type="match status" value="1"/>
</dbReference>
<dbReference type="SUPFAM" id="SSF69304">
    <property type="entry name" value="Tricorn protease N-terminal domain"/>
    <property type="match status" value="1"/>
</dbReference>
<proteinExistence type="inferred from homology"/>
<keyword id="KW-0131">Cell cycle</keyword>
<keyword id="KW-0132">Cell division</keyword>
<keyword id="KW-0574">Periplasm</keyword>
<keyword id="KW-1185">Reference proteome</keyword>
<keyword id="KW-0732">Signal</keyword>